<reference key="1">
    <citation type="journal article" date="2002" name="Nature">
        <title>Comparison of the genomes of two Xanthomonas pathogens with differing host specificities.</title>
        <authorList>
            <person name="da Silva A.C.R."/>
            <person name="Ferro J.A."/>
            <person name="Reinach F.C."/>
            <person name="Farah C.S."/>
            <person name="Furlan L.R."/>
            <person name="Quaggio R.B."/>
            <person name="Monteiro-Vitorello C.B."/>
            <person name="Van Sluys M.A."/>
            <person name="Almeida N.F. Jr."/>
            <person name="Alves L.M.C."/>
            <person name="do Amaral A.M."/>
            <person name="Bertolini M.C."/>
            <person name="Camargo L.E.A."/>
            <person name="Camarotte G."/>
            <person name="Cannavan F."/>
            <person name="Cardozo J."/>
            <person name="Chambergo F."/>
            <person name="Ciapina L.P."/>
            <person name="Cicarelli R.M.B."/>
            <person name="Coutinho L.L."/>
            <person name="Cursino-Santos J.R."/>
            <person name="El-Dorry H."/>
            <person name="Faria J.B."/>
            <person name="Ferreira A.J.S."/>
            <person name="Ferreira R.C.C."/>
            <person name="Ferro M.I.T."/>
            <person name="Formighieri E.F."/>
            <person name="Franco M.C."/>
            <person name="Greggio C.C."/>
            <person name="Gruber A."/>
            <person name="Katsuyama A.M."/>
            <person name="Kishi L.T."/>
            <person name="Leite R.P."/>
            <person name="Lemos E.G.M."/>
            <person name="Lemos M.V.F."/>
            <person name="Locali E.C."/>
            <person name="Machado M.A."/>
            <person name="Madeira A.M.B.N."/>
            <person name="Martinez-Rossi N.M."/>
            <person name="Martins E.C."/>
            <person name="Meidanis J."/>
            <person name="Menck C.F.M."/>
            <person name="Miyaki C.Y."/>
            <person name="Moon D.H."/>
            <person name="Moreira L.M."/>
            <person name="Novo M.T.M."/>
            <person name="Okura V.K."/>
            <person name="Oliveira M.C."/>
            <person name="Oliveira V.R."/>
            <person name="Pereira H.A."/>
            <person name="Rossi A."/>
            <person name="Sena J.A.D."/>
            <person name="Silva C."/>
            <person name="de Souza R.F."/>
            <person name="Spinola L.A.F."/>
            <person name="Takita M.A."/>
            <person name="Tamura R.E."/>
            <person name="Teixeira E.C."/>
            <person name="Tezza R.I.D."/>
            <person name="Trindade dos Santos M."/>
            <person name="Truffi D."/>
            <person name="Tsai S.M."/>
            <person name="White F.F."/>
            <person name="Setubal J.C."/>
            <person name="Kitajima J.P."/>
        </authorList>
    </citation>
    <scope>NUCLEOTIDE SEQUENCE [LARGE SCALE GENOMIC DNA]</scope>
    <source>
        <strain>ATCC 33913 / DSM 3586 / NCPPB 528 / LMG 568 / P 25</strain>
    </source>
</reference>
<proteinExistence type="inferred from homology"/>
<keyword id="KW-0413">Isomerase</keyword>
<keyword id="KW-0479">Metal-binding</keyword>
<keyword id="KW-1185">Reference proteome</keyword>
<keyword id="KW-0862">Zinc</keyword>
<organism>
    <name type="scientific">Xanthomonas campestris pv. campestris (strain ATCC 33913 / DSM 3586 / NCPPB 528 / LMG 568 / P 25)</name>
    <dbReference type="NCBI Taxonomy" id="190485"/>
    <lineage>
        <taxon>Bacteria</taxon>
        <taxon>Pseudomonadati</taxon>
        <taxon>Pseudomonadota</taxon>
        <taxon>Gammaproteobacteria</taxon>
        <taxon>Lysobacterales</taxon>
        <taxon>Lysobacteraceae</taxon>
        <taxon>Xanthomonas</taxon>
    </lineage>
</organism>
<dbReference type="EC" id="5.3.1.17" evidence="1"/>
<dbReference type="EMBL" id="AE008922">
    <property type="protein sequence ID" value="AAM39470.1"/>
    <property type="molecule type" value="Genomic_DNA"/>
</dbReference>
<dbReference type="RefSeq" id="NP_635546.1">
    <property type="nucleotide sequence ID" value="NC_003902.1"/>
</dbReference>
<dbReference type="RefSeq" id="WP_011035408.1">
    <property type="nucleotide sequence ID" value="NC_003902.1"/>
</dbReference>
<dbReference type="SMR" id="Q8PE32"/>
<dbReference type="STRING" id="190485.XCC0151"/>
<dbReference type="EnsemblBacteria" id="AAM39470">
    <property type="protein sequence ID" value="AAM39470"/>
    <property type="gene ID" value="XCC0151"/>
</dbReference>
<dbReference type="GeneID" id="58011474"/>
<dbReference type="KEGG" id="xcc:XCC0151"/>
<dbReference type="PATRIC" id="fig|190485.4.peg.171"/>
<dbReference type="eggNOG" id="COG3717">
    <property type="taxonomic scope" value="Bacteria"/>
</dbReference>
<dbReference type="HOGENOM" id="CLU_062609_0_0_6"/>
<dbReference type="OrthoDB" id="9770644at2"/>
<dbReference type="UniPathway" id="UPA00545">
    <property type="reaction ID" value="UER00826"/>
</dbReference>
<dbReference type="Proteomes" id="UP000001010">
    <property type="component" value="Chromosome"/>
</dbReference>
<dbReference type="GO" id="GO:0008697">
    <property type="term" value="F:4-deoxy-L-threo-5-hexosulose-uronate ketol-isomerase activity"/>
    <property type="evidence" value="ECO:0000318"/>
    <property type="project" value="GO_Central"/>
</dbReference>
<dbReference type="GO" id="GO:0046872">
    <property type="term" value="F:metal ion binding"/>
    <property type="evidence" value="ECO:0000318"/>
    <property type="project" value="GO_Central"/>
</dbReference>
<dbReference type="GO" id="GO:0008270">
    <property type="term" value="F:zinc ion binding"/>
    <property type="evidence" value="ECO:0007669"/>
    <property type="project" value="UniProtKB-UniRule"/>
</dbReference>
<dbReference type="GO" id="GO:0019698">
    <property type="term" value="P:D-galacturonate catabolic process"/>
    <property type="evidence" value="ECO:0000318"/>
    <property type="project" value="GO_Central"/>
</dbReference>
<dbReference type="GO" id="GO:0042840">
    <property type="term" value="P:D-glucuronate catabolic process"/>
    <property type="evidence" value="ECO:0000318"/>
    <property type="project" value="GO_Central"/>
</dbReference>
<dbReference type="GO" id="GO:0045490">
    <property type="term" value="P:pectin catabolic process"/>
    <property type="evidence" value="ECO:0007669"/>
    <property type="project" value="UniProtKB-UniRule"/>
</dbReference>
<dbReference type="CDD" id="cd20491">
    <property type="entry name" value="cupin_KduI_C"/>
    <property type="match status" value="1"/>
</dbReference>
<dbReference type="CDD" id="cd20294">
    <property type="entry name" value="cupin_KduI_N"/>
    <property type="match status" value="1"/>
</dbReference>
<dbReference type="Gene3D" id="2.60.120.10">
    <property type="entry name" value="Jelly Rolls"/>
    <property type="match status" value="1"/>
</dbReference>
<dbReference type="Gene3D" id="2.60.120.520">
    <property type="entry name" value="pectin degrading enzyme 5-keto 4- deoxyuronate isomerase, domain 1"/>
    <property type="match status" value="1"/>
</dbReference>
<dbReference type="HAMAP" id="MF_00687">
    <property type="entry name" value="KduI"/>
    <property type="match status" value="1"/>
</dbReference>
<dbReference type="InterPro" id="IPR007045">
    <property type="entry name" value="KduI"/>
</dbReference>
<dbReference type="InterPro" id="IPR021120">
    <property type="entry name" value="KduI/IolB_isomerase"/>
</dbReference>
<dbReference type="InterPro" id="IPR027449">
    <property type="entry name" value="KduI_N"/>
</dbReference>
<dbReference type="InterPro" id="IPR014710">
    <property type="entry name" value="RmlC-like_jellyroll"/>
</dbReference>
<dbReference type="InterPro" id="IPR011051">
    <property type="entry name" value="RmlC_Cupin_sf"/>
</dbReference>
<dbReference type="NCBIfam" id="NF002091">
    <property type="entry name" value="PRK00924.1"/>
    <property type="match status" value="1"/>
</dbReference>
<dbReference type="PANTHER" id="PTHR38461">
    <property type="entry name" value="4-DEOXY-L-THREO-5-HEXOSULOSE-URONATE KETOL-ISOMERASE"/>
    <property type="match status" value="1"/>
</dbReference>
<dbReference type="PANTHER" id="PTHR38461:SF1">
    <property type="entry name" value="4-DEOXY-L-THREO-5-HEXOSULOSE-URONATE KETOL-ISOMERASE"/>
    <property type="match status" value="1"/>
</dbReference>
<dbReference type="Pfam" id="PF04962">
    <property type="entry name" value="KduI"/>
    <property type="match status" value="1"/>
</dbReference>
<dbReference type="PIRSF" id="PIRSF006625">
    <property type="entry name" value="KduI"/>
    <property type="match status" value="1"/>
</dbReference>
<dbReference type="SUPFAM" id="SSF51182">
    <property type="entry name" value="RmlC-like cupins"/>
    <property type="match status" value="1"/>
</dbReference>
<evidence type="ECO:0000255" key="1">
    <source>
        <dbReference type="HAMAP-Rule" id="MF_00687"/>
    </source>
</evidence>
<feature type="chain" id="PRO_0000215499" description="4-deoxy-L-threo-5-hexosulose-uronate ketol-isomerase">
    <location>
        <begin position="1"/>
        <end position="284"/>
    </location>
</feature>
<feature type="binding site" evidence="1">
    <location>
        <position position="202"/>
    </location>
    <ligand>
        <name>Zn(2+)</name>
        <dbReference type="ChEBI" id="CHEBI:29105"/>
    </ligand>
</feature>
<feature type="binding site" evidence="1">
    <location>
        <position position="204"/>
    </location>
    <ligand>
        <name>Zn(2+)</name>
        <dbReference type="ChEBI" id="CHEBI:29105"/>
    </ligand>
</feature>
<feature type="binding site" evidence="1">
    <location>
        <position position="209"/>
    </location>
    <ligand>
        <name>Zn(2+)</name>
        <dbReference type="ChEBI" id="CHEBI:29105"/>
    </ligand>
</feature>
<feature type="binding site" evidence="1">
    <location>
        <position position="251"/>
    </location>
    <ligand>
        <name>Zn(2+)</name>
        <dbReference type="ChEBI" id="CHEBI:29105"/>
    </ligand>
</feature>
<name>KDUI_XANCP</name>
<gene>
    <name evidence="1" type="primary">kduI</name>
    <name type="ordered locus">XCC0151</name>
</gene>
<comment type="function">
    <text evidence="1">Catalyzes the isomerization of 5-dehydro-4-deoxy-D-glucuronate to 3-deoxy-D-glycero-2,5-hexodiulosonate.</text>
</comment>
<comment type="catalytic activity">
    <reaction evidence="1">
        <text>5-dehydro-4-deoxy-D-glucuronate = 3-deoxy-D-glycero-2,5-hexodiulosonate</text>
        <dbReference type="Rhea" id="RHEA:23896"/>
        <dbReference type="ChEBI" id="CHEBI:17117"/>
        <dbReference type="ChEBI" id="CHEBI:29071"/>
        <dbReference type="EC" id="5.3.1.17"/>
    </reaction>
</comment>
<comment type="cofactor">
    <cofactor evidence="1">
        <name>Zn(2+)</name>
        <dbReference type="ChEBI" id="CHEBI:29105"/>
    </cofactor>
    <text evidence="1">Binds 1 zinc ion per subunit.</text>
</comment>
<comment type="pathway">
    <text evidence="1">Glycan metabolism; pectin degradation; 2-dehydro-3-deoxy-D-gluconate from pectin: step 4/5.</text>
</comment>
<comment type="similarity">
    <text evidence="1">Belongs to the KduI family.</text>
</comment>
<protein>
    <recommendedName>
        <fullName evidence="1">4-deoxy-L-threo-5-hexosulose-uronate ketol-isomerase</fullName>
        <ecNumber evidence="1">5.3.1.17</ecNumber>
    </recommendedName>
    <alternativeName>
        <fullName evidence="1">5-keto-4-deoxyuronate isomerase</fullName>
    </alternativeName>
    <alternativeName>
        <fullName evidence="1">DKI isomerase</fullName>
    </alternativeName>
</protein>
<sequence>MSLYCKTHYATHPDALKGASNDTLRELYLLDGLFVADAVTLKYTHYERFVLGGAAPVGKTLELPKQTEPASAAGHPFLERRELGVINVGAGTGTVTVDGTAYTLGPKDGLYVAMGSTEVSFASADAANPAQFYLASTPAHARFETKQLSIKDAVALERGALETSNERTIYQYIVPATCQSSQLLLGLTVLKPGSVWNTMPPHLHDRRSEVYFYFDLGANDRVYHFMGEPDAQRHIVMQNNEAVVSPPWSIHMGAGTSNYAFIWAMGGENLDYTDMHVLDICQLK</sequence>
<accession>Q8PE32</accession>